<evidence type="ECO:0000250" key="1">
    <source>
        <dbReference type="UniProtKB" id="Q89424"/>
    </source>
</evidence>
<evidence type="ECO:0000255" key="2"/>
<evidence type="ECO:0000256" key="3">
    <source>
        <dbReference type="SAM" id="MobiDB-lite"/>
    </source>
</evidence>
<evidence type="ECO:0000305" key="4"/>
<keyword id="KW-0325">Glycoprotein</keyword>
<keyword id="KW-1038">Host endoplasmic reticulum</keyword>
<keyword id="KW-1043">Host membrane</keyword>
<keyword id="KW-0945">Host-virus interaction</keyword>
<keyword id="KW-1090">Inhibition of host innate immune response by virus</keyword>
<keyword id="KW-0426">Late protein</keyword>
<keyword id="KW-0472">Membrane</keyword>
<keyword id="KW-0812">Transmembrane</keyword>
<keyword id="KW-1133">Transmembrane helix</keyword>
<keyword id="KW-0899">Viral immunoevasion</keyword>
<keyword id="KW-0946">Virion</keyword>
<comment type="function">
    <text evidence="1">Together with the penton and the other minor capsid proteins (M1249L, p49), forms a complicated network immediately below the outer capsid shell, stabilizing the whole capsid. Three copies of p17 encircle each p72 capsomer in the inner capsid shell, anchoring p72 capsomers on the inner membrane. Required for the assembly of the capsid and icosahedral morphogenesis. Additionally, inhibits the host cGAS-STING pathway through its interaction with STING1 and subsequent interference of the recruitment of downstream components TBK1 and IKBKE.</text>
</comment>
<comment type="subunit">
    <text evidence="1">Interacts with the minor capsid protein M1249L and with the hexon capsid protein p72 capsomers; these interactions form a rigid zipper structure that stabilizes the capsomers. Interacts with host STING1.</text>
</comment>
<comment type="subcellular location">
    <subcellularLocation>
        <location evidence="1">Virion membrane</location>
        <topology evidence="2">Single-pass membrane protein</topology>
    </subcellularLocation>
    <subcellularLocation>
        <location evidence="1">Host endoplasmic reticulum membrane</location>
        <topology evidence="2">Single-pass membrane protein</topology>
    </subcellularLocation>
    <text>Found in the inner envelope of the virus.</text>
</comment>
<comment type="induction">
    <text evidence="4">Expressed in the late phase of the viral replicative cycle.</text>
</comment>
<comment type="similarity">
    <text evidence="4">Belongs to the asfivirus minor capsid protein p17 family.</text>
</comment>
<feature type="chain" id="PRO_0000373404" description="Minor capsid protein p17">
    <location>
        <begin position="1"/>
        <end position="117"/>
    </location>
</feature>
<feature type="transmembrane region" description="Helical" evidence="2">
    <location>
        <begin position="39"/>
        <end position="59"/>
    </location>
</feature>
<feature type="region of interest" description="Disordered" evidence="3">
    <location>
        <begin position="96"/>
        <end position="117"/>
    </location>
</feature>
<feature type="glycosylation site" description="N-linked (GlcNAc...) asparagine; by host" evidence="2">
    <location>
        <position position="12"/>
    </location>
</feature>
<feature type="glycosylation site" description="N-linked (GlcNAc...) asparagine; by host" evidence="2">
    <location>
        <position position="97"/>
    </location>
</feature>
<reference key="1">
    <citation type="submission" date="2003-03" db="EMBL/GenBank/DDBJ databases">
        <title>African swine fever virus genomes.</title>
        <authorList>
            <person name="Kutish G.F."/>
            <person name="Rock D.L."/>
        </authorList>
    </citation>
    <scope>NUCLEOTIDE SEQUENCE [GENOMIC DNA]</scope>
</reference>
<gene>
    <name type="ordered locus">Pret-119</name>
</gene>
<protein>
    <recommendedName>
        <fullName evidence="1">Minor capsid protein p17</fullName>
    </recommendedName>
</protein>
<accession>P0C9Y9</accession>
<organism>
    <name type="scientific">African swine fever virus (isolate Tick/South Africa/Pretoriuskop Pr4/1996)</name>
    <name type="common">ASFV</name>
    <dbReference type="NCBI Taxonomy" id="561443"/>
    <lineage>
        <taxon>Viruses</taxon>
        <taxon>Varidnaviria</taxon>
        <taxon>Bamfordvirae</taxon>
        <taxon>Nucleocytoviricota</taxon>
        <taxon>Pokkesviricetes</taxon>
        <taxon>Asfuvirales</taxon>
        <taxon>Asfarviridae</taxon>
        <taxon>Asfivirus</taxon>
        <taxon>African swine fever virus</taxon>
    </lineage>
</organism>
<proteinExistence type="inferred from homology"/>
<name>P17_ASFP4</name>
<organismHost>
    <name type="scientific">Ornithodoros</name>
    <name type="common">relapsing fever ticks</name>
    <dbReference type="NCBI Taxonomy" id="6937"/>
</organismHost>
<organismHost>
    <name type="scientific">Phacochoerus aethiopicus</name>
    <name type="common">Warthog</name>
    <dbReference type="NCBI Taxonomy" id="85517"/>
</organismHost>
<organismHost>
    <name type="scientific">Phacochoerus africanus</name>
    <name type="common">Warthog</name>
    <dbReference type="NCBI Taxonomy" id="41426"/>
</organismHost>
<organismHost>
    <name type="scientific">Potamochoerus larvatus</name>
    <name type="common">Bushpig</name>
    <dbReference type="NCBI Taxonomy" id="273792"/>
</organismHost>
<organismHost>
    <name type="scientific">Sus scrofa</name>
    <name type="common">Pig</name>
    <dbReference type="NCBI Taxonomy" id="9823"/>
</organismHost>
<sequence length="117" mass="13127">MDTETSPLLSHNLSTREGIKQSTQGLLAHTIAKYPGTTAILLGILILLVIILIIVAIVYYNRAVDCNSNMPKPPPSYYVQQPEPHHHFPVFFRRRKNSTSQQSHIPSDEQLAELAHS</sequence>
<dbReference type="EMBL" id="AY261363">
    <property type="status" value="NOT_ANNOTATED_CDS"/>
    <property type="molecule type" value="Genomic_DNA"/>
</dbReference>
<dbReference type="SMR" id="P0C9Y9"/>
<dbReference type="Proteomes" id="UP000000859">
    <property type="component" value="Segment"/>
</dbReference>
<dbReference type="GO" id="GO:0044167">
    <property type="term" value="C:host cell endoplasmic reticulum membrane"/>
    <property type="evidence" value="ECO:0007669"/>
    <property type="project" value="UniProtKB-SubCell"/>
</dbReference>
<dbReference type="GO" id="GO:0016020">
    <property type="term" value="C:membrane"/>
    <property type="evidence" value="ECO:0007669"/>
    <property type="project" value="UniProtKB-KW"/>
</dbReference>
<dbReference type="GO" id="GO:0055036">
    <property type="term" value="C:virion membrane"/>
    <property type="evidence" value="ECO:0007669"/>
    <property type="project" value="UniProtKB-SubCell"/>
</dbReference>
<dbReference type="GO" id="GO:0052170">
    <property type="term" value="P:symbiont-mediated suppression of host innate immune response"/>
    <property type="evidence" value="ECO:0007669"/>
    <property type="project" value="UniProtKB-KW"/>
</dbReference>